<reference key="1">
    <citation type="journal article" date="2002" name="Mol. Microbiol.">
        <title>Genome sequence of Streptococcus agalactiae, a pathogen causing invasive neonatal disease.</title>
        <authorList>
            <person name="Glaser P."/>
            <person name="Rusniok C."/>
            <person name="Buchrieser C."/>
            <person name="Chevalier F."/>
            <person name="Frangeul L."/>
            <person name="Msadek T."/>
            <person name="Zouine M."/>
            <person name="Couve E."/>
            <person name="Lalioui L."/>
            <person name="Poyart C."/>
            <person name="Trieu-Cuot P."/>
            <person name="Kunst F."/>
        </authorList>
    </citation>
    <scope>NUCLEOTIDE SEQUENCE [LARGE SCALE GENOMIC DNA]</scope>
    <source>
        <strain>NEM316</strain>
    </source>
</reference>
<feature type="chain" id="PRO_0000229692" description="NAD kinase">
    <location>
        <begin position="1"/>
        <end position="278"/>
    </location>
</feature>
<feature type="active site" description="Proton acceptor" evidence="1">
    <location>
        <position position="56"/>
    </location>
</feature>
<feature type="binding site" evidence="1">
    <location>
        <begin position="56"/>
        <end position="57"/>
    </location>
    <ligand>
        <name>NAD(+)</name>
        <dbReference type="ChEBI" id="CHEBI:57540"/>
    </ligand>
</feature>
<feature type="binding site" evidence="1">
    <location>
        <begin position="132"/>
        <end position="133"/>
    </location>
    <ligand>
        <name>NAD(+)</name>
        <dbReference type="ChEBI" id="CHEBI:57540"/>
    </ligand>
</feature>
<feature type="binding site" evidence="1">
    <location>
        <position position="158"/>
    </location>
    <ligand>
        <name>NAD(+)</name>
        <dbReference type="ChEBI" id="CHEBI:57540"/>
    </ligand>
</feature>
<feature type="binding site" evidence="1">
    <location>
        <position position="160"/>
    </location>
    <ligand>
        <name>NAD(+)</name>
        <dbReference type="ChEBI" id="CHEBI:57540"/>
    </ligand>
</feature>
<feature type="binding site" evidence="1">
    <location>
        <begin position="171"/>
        <end position="176"/>
    </location>
    <ligand>
        <name>NAD(+)</name>
        <dbReference type="ChEBI" id="CHEBI:57540"/>
    </ligand>
</feature>
<protein>
    <recommendedName>
        <fullName evidence="1">NAD kinase</fullName>
        <ecNumber evidence="1">2.7.1.23</ecNumber>
    </recommendedName>
    <alternativeName>
        <fullName evidence="1">ATP-dependent NAD kinase</fullName>
    </alternativeName>
</protein>
<sequence length="278" mass="31308">MTQMNFTDRATRVAIIANGKYQSKRVASKLFAAFKHDPDFYLSKKDPDIVISIGGDGMLLSAFHMYEKQLDKVRFVGVHTGHLGFYTDYRDFEVDTLINNLKNDEGEQISYPILKVTITLEDGRVIRARALNESTIKRIEKTMVADVVINQVVFERFRGDGILVSTPTGSTAYNKSLGGAVLHPTIEALQLTEISSLNNRVYRTLGSSVIIPKKDAIEIVPKRVGVYTISIDNKTVHYKNVTKIEYSIDEKSINFVSTPSHTSFWERVNDAFIGEPEH</sequence>
<organism>
    <name type="scientific">Streptococcus agalactiae serotype III (strain NEM316)</name>
    <dbReference type="NCBI Taxonomy" id="211110"/>
    <lineage>
        <taxon>Bacteria</taxon>
        <taxon>Bacillati</taxon>
        <taxon>Bacillota</taxon>
        <taxon>Bacilli</taxon>
        <taxon>Lactobacillales</taxon>
        <taxon>Streptococcaceae</taxon>
        <taxon>Streptococcus</taxon>
    </lineage>
</organism>
<evidence type="ECO:0000255" key="1">
    <source>
        <dbReference type="HAMAP-Rule" id="MF_00361"/>
    </source>
</evidence>
<dbReference type="EC" id="2.7.1.23" evidence="1"/>
<dbReference type="EMBL" id="AL766849">
    <property type="protein sequence ID" value="CAD46820.1"/>
    <property type="molecule type" value="Genomic_DNA"/>
</dbReference>
<dbReference type="RefSeq" id="WP_000192906.1">
    <property type="nucleotide sequence ID" value="NC_004368.1"/>
</dbReference>
<dbReference type="SMR" id="Q8E571"/>
<dbReference type="KEGG" id="san:gbs1161"/>
<dbReference type="eggNOG" id="COG0061">
    <property type="taxonomic scope" value="Bacteria"/>
</dbReference>
<dbReference type="HOGENOM" id="CLU_008831_0_3_9"/>
<dbReference type="Proteomes" id="UP000000823">
    <property type="component" value="Chromosome"/>
</dbReference>
<dbReference type="GO" id="GO:0005737">
    <property type="term" value="C:cytoplasm"/>
    <property type="evidence" value="ECO:0007669"/>
    <property type="project" value="UniProtKB-SubCell"/>
</dbReference>
<dbReference type="GO" id="GO:0005524">
    <property type="term" value="F:ATP binding"/>
    <property type="evidence" value="ECO:0007669"/>
    <property type="project" value="UniProtKB-KW"/>
</dbReference>
<dbReference type="GO" id="GO:0046872">
    <property type="term" value="F:metal ion binding"/>
    <property type="evidence" value="ECO:0007669"/>
    <property type="project" value="UniProtKB-UniRule"/>
</dbReference>
<dbReference type="GO" id="GO:0051287">
    <property type="term" value="F:NAD binding"/>
    <property type="evidence" value="ECO:0007669"/>
    <property type="project" value="UniProtKB-ARBA"/>
</dbReference>
<dbReference type="GO" id="GO:0003951">
    <property type="term" value="F:NAD+ kinase activity"/>
    <property type="evidence" value="ECO:0007669"/>
    <property type="project" value="UniProtKB-UniRule"/>
</dbReference>
<dbReference type="GO" id="GO:0019674">
    <property type="term" value="P:NAD metabolic process"/>
    <property type="evidence" value="ECO:0007669"/>
    <property type="project" value="InterPro"/>
</dbReference>
<dbReference type="GO" id="GO:0006741">
    <property type="term" value="P:NADP biosynthetic process"/>
    <property type="evidence" value="ECO:0007669"/>
    <property type="project" value="UniProtKB-UniRule"/>
</dbReference>
<dbReference type="Gene3D" id="3.40.50.10330">
    <property type="entry name" value="Probable inorganic polyphosphate/atp-NAD kinase, domain 1"/>
    <property type="match status" value="1"/>
</dbReference>
<dbReference type="Gene3D" id="2.60.200.30">
    <property type="entry name" value="Probable inorganic polyphosphate/atp-NAD kinase, domain 2"/>
    <property type="match status" value="1"/>
</dbReference>
<dbReference type="HAMAP" id="MF_00361">
    <property type="entry name" value="NAD_kinase"/>
    <property type="match status" value="1"/>
</dbReference>
<dbReference type="InterPro" id="IPR017438">
    <property type="entry name" value="ATP-NAD_kinase_N"/>
</dbReference>
<dbReference type="InterPro" id="IPR017437">
    <property type="entry name" value="ATP-NAD_kinase_PpnK-typ_C"/>
</dbReference>
<dbReference type="InterPro" id="IPR016064">
    <property type="entry name" value="NAD/diacylglycerol_kinase_sf"/>
</dbReference>
<dbReference type="InterPro" id="IPR002504">
    <property type="entry name" value="NADK"/>
</dbReference>
<dbReference type="NCBIfam" id="NF003424">
    <property type="entry name" value="PRK04885.1"/>
    <property type="match status" value="1"/>
</dbReference>
<dbReference type="PANTHER" id="PTHR20275">
    <property type="entry name" value="NAD KINASE"/>
    <property type="match status" value="1"/>
</dbReference>
<dbReference type="PANTHER" id="PTHR20275:SF0">
    <property type="entry name" value="NAD KINASE"/>
    <property type="match status" value="1"/>
</dbReference>
<dbReference type="Pfam" id="PF01513">
    <property type="entry name" value="NAD_kinase"/>
    <property type="match status" value="1"/>
</dbReference>
<dbReference type="Pfam" id="PF20143">
    <property type="entry name" value="NAD_kinase_C"/>
    <property type="match status" value="1"/>
</dbReference>
<dbReference type="SUPFAM" id="SSF111331">
    <property type="entry name" value="NAD kinase/diacylglycerol kinase-like"/>
    <property type="match status" value="1"/>
</dbReference>
<proteinExistence type="inferred from homology"/>
<gene>
    <name evidence="1" type="primary">nadK</name>
    <name type="ordered locus">gbs1161</name>
</gene>
<accession>Q8E571</accession>
<name>NADK_STRA3</name>
<comment type="function">
    <text evidence="1">Involved in the regulation of the intracellular balance of NAD and NADP, and is a key enzyme in the biosynthesis of NADP. Catalyzes specifically the phosphorylation on 2'-hydroxyl of the adenosine moiety of NAD to yield NADP.</text>
</comment>
<comment type="catalytic activity">
    <reaction evidence="1">
        <text>NAD(+) + ATP = ADP + NADP(+) + H(+)</text>
        <dbReference type="Rhea" id="RHEA:18629"/>
        <dbReference type="ChEBI" id="CHEBI:15378"/>
        <dbReference type="ChEBI" id="CHEBI:30616"/>
        <dbReference type="ChEBI" id="CHEBI:57540"/>
        <dbReference type="ChEBI" id="CHEBI:58349"/>
        <dbReference type="ChEBI" id="CHEBI:456216"/>
        <dbReference type="EC" id="2.7.1.23"/>
    </reaction>
</comment>
<comment type="cofactor">
    <cofactor evidence="1">
        <name>a divalent metal cation</name>
        <dbReference type="ChEBI" id="CHEBI:60240"/>
    </cofactor>
</comment>
<comment type="subcellular location">
    <subcellularLocation>
        <location evidence="1">Cytoplasm</location>
    </subcellularLocation>
</comment>
<comment type="similarity">
    <text evidence="1">Belongs to the NAD kinase family.</text>
</comment>
<keyword id="KW-0067">ATP-binding</keyword>
<keyword id="KW-0963">Cytoplasm</keyword>
<keyword id="KW-0418">Kinase</keyword>
<keyword id="KW-0520">NAD</keyword>
<keyword id="KW-0521">NADP</keyword>
<keyword id="KW-0547">Nucleotide-binding</keyword>
<keyword id="KW-0808">Transferase</keyword>